<proteinExistence type="inferred from homology"/>
<evidence type="ECO:0000255" key="1">
    <source>
        <dbReference type="HAMAP-Rule" id="MF_01032"/>
    </source>
</evidence>
<keyword id="KW-0028">Amino-acid biosynthesis</keyword>
<keyword id="KW-0100">Branched-chain amino acid biosynthesis</keyword>
<keyword id="KW-0432">Leucine biosynthesis</keyword>
<keyword id="KW-0456">Lyase</keyword>
<sequence length="163" mass="17838">MSDIILKGKVHKYGSNVNTDEIIPARYLNTTDPTILSKYCMEDIDKNFVKNVKAGDIIVAENNFGCGSSREHAPIAIKASGISAVIANSFARIFFRNSINIGLPILESQKAVKAIENGDAVEINLTKGIIKNITKNESYQSQPFPEFMQKVIKSGGLLGYIKS</sequence>
<name>LEUD_ENDTX</name>
<accession>B1H0A5</accession>
<dbReference type="EC" id="4.2.1.33" evidence="1"/>
<dbReference type="EMBL" id="AP009510">
    <property type="protein sequence ID" value="BAG13937.1"/>
    <property type="molecule type" value="Genomic_DNA"/>
</dbReference>
<dbReference type="SMR" id="B1H0A5"/>
<dbReference type="STRING" id="471821.TGRD_454"/>
<dbReference type="KEGG" id="rsd:TGRD_454"/>
<dbReference type="PATRIC" id="fig|471821.5.peg.736"/>
<dbReference type="HOGENOM" id="CLU_081378_1_1_0"/>
<dbReference type="UniPathway" id="UPA00048">
    <property type="reaction ID" value="UER00071"/>
</dbReference>
<dbReference type="Proteomes" id="UP000001691">
    <property type="component" value="Chromosome"/>
</dbReference>
<dbReference type="GO" id="GO:0003861">
    <property type="term" value="F:3-isopropylmalate dehydratase activity"/>
    <property type="evidence" value="ECO:0007669"/>
    <property type="project" value="UniProtKB-UniRule"/>
</dbReference>
<dbReference type="GO" id="GO:0009098">
    <property type="term" value="P:L-leucine biosynthetic process"/>
    <property type="evidence" value="ECO:0007669"/>
    <property type="project" value="UniProtKB-UniRule"/>
</dbReference>
<dbReference type="CDD" id="cd01577">
    <property type="entry name" value="IPMI_Swivel"/>
    <property type="match status" value="1"/>
</dbReference>
<dbReference type="FunFam" id="3.20.19.10:FF:000007">
    <property type="entry name" value="Isopropylmalate/citramalate isomerase small subunit"/>
    <property type="match status" value="1"/>
</dbReference>
<dbReference type="Gene3D" id="3.20.19.10">
    <property type="entry name" value="Aconitase, domain 4"/>
    <property type="match status" value="1"/>
</dbReference>
<dbReference type="HAMAP" id="MF_01032">
    <property type="entry name" value="LeuD_type2"/>
    <property type="match status" value="1"/>
</dbReference>
<dbReference type="InterPro" id="IPR015928">
    <property type="entry name" value="Aconitase/3IPM_dehydase_swvl"/>
</dbReference>
<dbReference type="InterPro" id="IPR000573">
    <property type="entry name" value="AconitaseA/IPMdHydase_ssu_swvl"/>
</dbReference>
<dbReference type="InterPro" id="IPR033940">
    <property type="entry name" value="IPMI_Swivel"/>
</dbReference>
<dbReference type="InterPro" id="IPR050075">
    <property type="entry name" value="LeuD"/>
</dbReference>
<dbReference type="InterPro" id="IPR011824">
    <property type="entry name" value="LeuD/DmdB_bac"/>
</dbReference>
<dbReference type="InterPro" id="IPR011827">
    <property type="entry name" value="LeuD_type2/HacB/DmdB"/>
</dbReference>
<dbReference type="NCBIfam" id="TIGR02084">
    <property type="entry name" value="leud"/>
    <property type="match status" value="1"/>
</dbReference>
<dbReference type="NCBIfam" id="TIGR02087">
    <property type="entry name" value="LEUD_arch"/>
    <property type="match status" value="1"/>
</dbReference>
<dbReference type="PANTHER" id="PTHR43345:SF2">
    <property type="entry name" value="3-ISOPROPYLMALATE DEHYDRATASE SMALL SUBUNIT 1"/>
    <property type="match status" value="1"/>
</dbReference>
<dbReference type="PANTHER" id="PTHR43345">
    <property type="entry name" value="3-ISOPROPYLMALATE DEHYDRATASE SMALL SUBUNIT 2-RELATED-RELATED"/>
    <property type="match status" value="1"/>
</dbReference>
<dbReference type="Pfam" id="PF00694">
    <property type="entry name" value="Aconitase_C"/>
    <property type="match status" value="1"/>
</dbReference>
<dbReference type="SUPFAM" id="SSF52016">
    <property type="entry name" value="LeuD/IlvD-like"/>
    <property type="match status" value="1"/>
</dbReference>
<comment type="function">
    <text evidence="1">Catalyzes the isomerization between 2-isopropylmalate and 3-isopropylmalate, via the formation of 2-isopropylmaleate.</text>
</comment>
<comment type="catalytic activity">
    <reaction evidence="1">
        <text>(2R,3S)-3-isopropylmalate = (2S)-2-isopropylmalate</text>
        <dbReference type="Rhea" id="RHEA:32287"/>
        <dbReference type="ChEBI" id="CHEBI:1178"/>
        <dbReference type="ChEBI" id="CHEBI:35121"/>
        <dbReference type="EC" id="4.2.1.33"/>
    </reaction>
</comment>
<comment type="pathway">
    <text evidence="1">Amino-acid biosynthesis; L-leucine biosynthesis; L-leucine from 3-methyl-2-oxobutanoate: step 2/4.</text>
</comment>
<comment type="subunit">
    <text evidence="1">Heterodimer of LeuC and LeuD.</text>
</comment>
<comment type="similarity">
    <text evidence="1">Belongs to the LeuD family. LeuD type 2 subfamily.</text>
</comment>
<reference key="1">
    <citation type="journal article" date="2008" name="Proc. Natl. Acad. Sci. U.S.A.">
        <title>Complete genome of the uncultured termite group 1 bacteria in a single host protist cell.</title>
        <authorList>
            <person name="Hongoh Y."/>
            <person name="Sharma V.K."/>
            <person name="Prakash T."/>
            <person name="Noda S."/>
            <person name="Taylor T.D."/>
            <person name="Kudo T."/>
            <person name="Sakaki Y."/>
            <person name="Toyoda A."/>
            <person name="Hattori M."/>
            <person name="Ohkuma M."/>
        </authorList>
    </citation>
    <scope>NUCLEOTIDE SEQUENCE [LARGE SCALE GENOMIC DNA]</scope>
</reference>
<organism>
    <name type="scientific">Endomicrobium trichonymphae</name>
    <dbReference type="NCBI Taxonomy" id="1408204"/>
    <lineage>
        <taxon>Bacteria</taxon>
        <taxon>Pseudomonadati</taxon>
        <taxon>Elusimicrobiota</taxon>
        <taxon>Endomicrobiia</taxon>
        <taxon>Endomicrobiales</taxon>
        <taxon>Endomicrobiaceae</taxon>
        <taxon>Candidatus Endomicrobiellum</taxon>
    </lineage>
</organism>
<gene>
    <name evidence="1" type="primary">leuD</name>
    <name type="ordered locus">TGRD_454</name>
</gene>
<feature type="chain" id="PRO_1000213374" description="3-isopropylmalate dehydratase small subunit">
    <location>
        <begin position="1"/>
        <end position="163"/>
    </location>
</feature>
<protein>
    <recommendedName>
        <fullName evidence="1">3-isopropylmalate dehydratase small subunit</fullName>
        <ecNumber evidence="1">4.2.1.33</ecNumber>
    </recommendedName>
    <alternativeName>
        <fullName evidence="1">Alpha-IPM isomerase</fullName>
        <shortName evidence="1">IPMI</shortName>
    </alternativeName>
    <alternativeName>
        <fullName evidence="1">Isopropylmalate isomerase</fullName>
    </alternativeName>
</protein>